<reference key="1">
    <citation type="journal article" date="1970" name="Biochem. Genet.">
        <title>Production of hemoglobin C in the Moufflon (Ovis musimon Pallas, 1811) and the Barbary sheep (Ammotragus lervia Pallas, 1777) during experimental anemia: amino acid composition of tryptic peptides from the beta B and beta C chains.</title>
        <authorList>
            <person name="Wilson J.B."/>
            <person name="Miller A."/>
            <person name="Huisman T.H.J."/>
        </authorList>
    </citation>
    <scope>PROTEIN SEQUENCE OF 1-103 AND 116-145</scope>
</reference>
<name>HBB_OVIMU</name>
<sequence length="145" mass="16123">MLTAEEKAAVTGFWGKVKVDEVGAEALGRLLVVYPWTQRFFEHFGDLSSADAVMNNAKVKAHGKKVLBSFSNGMKHLDDLKGTFAQLSELHCDKLHVBPZBFRXXXXXXXXXXXXHHGSEFTPVLQAZFQKVVAGVANALAHRYH</sequence>
<proteinExistence type="evidence at protein level"/>
<keyword id="KW-0007">Acetylation</keyword>
<keyword id="KW-0903">Direct protein sequencing</keyword>
<keyword id="KW-0349">Heme</keyword>
<keyword id="KW-0408">Iron</keyword>
<keyword id="KW-0479">Metal-binding</keyword>
<keyword id="KW-0561">Oxygen transport</keyword>
<keyword id="KW-0597">Phosphoprotein</keyword>
<keyword id="KW-0702">S-nitrosylation</keyword>
<keyword id="KW-0813">Transport</keyword>
<comment type="function">
    <text>Involved in oxygen transport from the lung to the various peripheral tissues.</text>
</comment>
<comment type="subunit">
    <text>Heterotetramer of two alpha chains and two beta chains.</text>
</comment>
<comment type="tissue specificity">
    <text>Red blood cells.</text>
</comment>
<comment type="miscellaneous">
    <text>This beta chain is termed the B allele, even though it more closely resembles the sheep A allele.</text>
</comment>
<comment type="similarity">
    <text evidence="2">Belongs to the globin family.</text>
</comment>
<evidence type="ECO:0000250" key="1">
    <source>
        <dbReference type="UniProtKB" id="P68871"/>
    </source>
</evidence>
<evidence type="ECO:0000255" key="2">
    <source>
        <dbReference type="PROSITE-ProRule" id="PRU00238"/>
    </source>
</evidence>
<organism>
    <name type="scientific">Ovis aries musimon</name>
    <name type="common">Mouflon</name>
    <dbReference type="NCBI Taxonomy" id="9938"/>
    <lineage>
        <taxon>Eukaryota</taxon>
        <taxon>Metazoa</taxon>
        <taxon>Chordata</taxon>
        <taxon>Craniata</taxon>
        <taxon>Vertebrata</taxon>
        <taxon>Euteleostomi</taxon>
        <taxon>Mammalia</taxon>
        <taxon>Eutheria</taxon>
        <taxon>Laurasiatheria</taxon>
        <taxon>Artiodactyla</taxon>
        <taxon>Ruminantia</taxon>
        <taxon>Pecora</taxon>
        <taxon>Bovidae</taxon>
        <taxon>Caprinae</taxon>
        <taxon>Ovis</taxon>
    </lineage>
</organism>
<protein>
    <recommendedName>
        <fullName>Hemoglobin subunit beta</fullName>
    </recommendedName>
    <alternativeName>
        <fullName>Beta-globin</fullName>
    </alternativeName>
    <alternativeName>
        <fullName>Hemoglobin beta chain</fullName>
    </alternativeName>
</protein>
<gene>
    <name type="primary">HBB</name>
</gene>
<accession>P02076</accession>
<feature type="chain" id="PRO_0000053044" description="Hemoglobin subunit beta">
    <location>
        <begin position="1"/>
        <end position="145"/>
    </location>
</feature>
<feature type="domain" description="Globin" evidence="2">
    <location>
        <begin position="1"/>
        <end position="145"/>
    </location>
</feature>
<feature type="binding site" description="distal binding residue">
    <location>
        <position position="62"/>
    </location>
    <ligand>
        <name>heme b</name>
        <dbReference type="ChEBI" id="CHEBI:60344"/>
    </ligand>
    <ligandPart>
        <name>Fe</name>
        <dbReference type="ChEBI" id="CHEBI:18248"/>
    </ligandPart>
</feature>
<feature type="binding site" description="proximal binding residue">
    <location>
        <position position="91"/>
    </location>
    <ligand>
        <name>heme b</name>
        <dbReference type="ChEBI" id="CHEBI:60344"/>
    </ligand>
    <ligandPart>
        <name>Fe</name>
        <dbReference type="ChEBI" id="CHEBI:18248"/>
    </ligandPart>
</feature>
<feature type="modified residue" description="Phosphothreonine" evidence="1">
    <location>
        <position position="11"/>
    </location>
</feature>
<feature type="modified residue" description="N6-acetyllysine" evidence="1">
    <location>
        <position position="58"/>
    </location>
</feature>
<feature type="modified residue" description="N6-acetyllysine" evidence="1">
    <location>
        <position position="81"/>
    </location>
</feature>
<feature type="modified residue" description="S-nitrosocysteine" evidence="1">
    <location>
        <position position="92"/>
    </location>
</feature>
<dbReference type="GO" id="GO:0072562">
    <property type="term" value="C:blood microparticle"/>
    <property type="evidence" value="ECO:0007669"/>
    <property type="project" value="TreeGrafter"/>
</dbReference>
<dbReference type="GO" id="GO:0031838">
    <property type="term" value="C:haptoglobin-hemoglobin complex"/>
    <property type="evidence" value="ECO:0007669"/>
    <property type="project" value="TreeGrafter"/>
</dbReference>
<dbReference type="GO" id="GO:0005833">
    <property type="term" value="C:hemoglobin complex"/>
    <property type="evidence" value="ECO:0007669"/>
    <property type="project" value="InterPro"/>
</dbReference>
<dbReference type="GO" id="GO:0031720">
    <property type="term" value="F:haptoglobin binding"/>
    <property type="evidence" value="ECO:0007669"/>
    <property type="project" value="TreeGrafter"/>
</dbReference>
<dbReference type="GO" id="GO:0020037">
    <property type="term" value="F:heme binding"/>
    <property type="evidence" value="ECO:0007669"/>
    <property type="project" value="InterPro"/>
</dbReference>
<dbReference type="GO" id="GO:0031721">
    <property type="term" value="F:hemoglobin alpha binding"/>
    <property type="evidence" value="ECO:0007669"/>
    <property type="project" value="TreeGrafter"/>
</dbReference>
<dbReference type="GO" id="GO:0046872">
    <property type="term" value="F:metal ion binding"/>
    <property type="evidence" value="ECO:0007669"/>
    <property type="project" value="UniProtKB-KW"/>
</dbReference>
<dbReference type="GO" id="GO:0043177">
    <property type="term" value="F:organic acid binding"/>
    <property type="evidence" value="ECO:0007669"/>
    <property type="project" value="TreeGrafter"/>
</dbReference>
<dbReference type="GO" id="GO:0019825">
    <property type="term" value="F:oxygen binding"/>
    <property type="evidence" value="ECO:0007669"/>
    <property type="project" value="InterPro"/>
</dbReference>
<dbReference type="GO" id="GO:0005344">
    <property type="term" value="F:oxygen carrier activity"/>
    <property type="evidence" value="ECO:0007669"/>
    <property type="project" value="UniProtKB-KW"/>
</dbReference>
<dbReference type="GO" id="GO:0004601">
    <property type="term" value="F:peroxidase activity"/>
    <property type="evidence" value="ECO:0007669"/>
    <property type="project" value="TreeGrafter"/>
</dbReference>
<dbReference type="GO" id="GO:0042744">
    <property type="term" value="P:hydrogen peroxide catabolic process"/>
    <property type="evidence" value="ECO:0007669"/>
    <property type="project" value="TreeGrafter"/>
</dbReference>
<dbReference type="CDD" id="cd08925">
    <property type="entry name" value="Hb-beta-like"/>
    <property type="match status" value="1"/>
</dbReference>
<dbReference type="FunFam" id="1.10.490.10:FF:000001">
    <property type="entry name" value="Hemoglobin subunit beta"/>
    <property type="match status" value="1"/>
</dbReference>
<dbReference type="Gene3D" id="1.10.490.10">
    <property type="entry name" value="Globins"/>
    <property type="match status" value="1"/>
</dbReference>
<dbReference type="InterPro" id="IPR000971">
    <property type="entry name" value="Globin"/>
</dbReference>
<dbReference type="InterPro" id="IPR009050">
    <property type="entry name" value="Globin-like_sf"/>
</dbReference>
<dbReference type="InterPro" id="IPR012292">
    <property type="entry name" value="Globin/Proto"/>
</dbReference>
<dbReference type="InterPro" id="IPR002337">
    <property type="entry name" value="Hemoglobin_b"/>
</dbReference>
<dbReference type="InterPro" id="IPR050056">
    <property type="entry name" value="Hemoglobin_oxygen_transport"/>
</dbReference>
<dbReference type="PANTHER" id="PTHR11442">
    <property type="entry name" value="HEMOGLOBIN FAMILY MEMBER"/>
    <property type="match status" value="1"/>
</dbReference>
<dbReference type="PANTHER" id="PTHR11442:SF42">
    <property type="entry name" value="HEMOGLOBIN SUBUNIT BETA"/>
    <property type="match status" value="1"/>
</dbReference>
<dbReference type="Pfam" id="PF00042">
    <property type="entry name" value="Globin"/>
    <property type="match status" value="1"/>
</dbReference>
<dbReference type="PRINTS" id="PR00814">
    <property type="entry name" value="BETAHAEM"/>
</dbReference>
<dbReference type="SUPFAM" id="SSF46458">
    <property type="entry name" value="Globin-like"/>
    <property type="match status" value="1"/>
</dbReference>
<dbReference type="PROSITE" id="PS01033">
    <property type="entry name" value="GLOBIN"/>
    <property type="match status" value="1"/>
</dbReference>